<reference key="1">
    <citation type="journal article" date="2004" name="Nucleic Acids Res.">
        <title>Comparative analysis of the Borrelia garinii genome.</title>
        <authorList>
            <person name="Gloeckner G."/>
            <person name="Lehmann R."/>
            <person name="Romualdi A."/>
            <person name="Pradella S."/>
            <person name="Schulte-Spechtel U."/>
            <person name="Schilhabel M."/>
            <person name="Wilske B."/>
            <person name="Suehnel J."/>
            <person name="Platzer M."/>
        </authorList>
    </citation>
    <scope>NUCLEOTIDE SEQUENCE [LARGE SCALE GENOMIC DNA]</scope>
    <source>
        <strain>ATCC BAA-2496 / DSM 23469 / PBi</strain>
    </source>
</reference>
<comment type="function">
    <text evidence="1">Specifically methylates the N7 position of a guanine in 16S rRNA.</text>
</comment>
<comment type="subcellular location">
    <subcellularLocation>
        <location evidence="1">Cytoplasm</location>
    </subcellularLocation>
</comment>
<comment type="similarity">
    <text evidence="1">Belongs to the methyltransferase superfamily. RNA methyltransferase RsmG family.</text>
</comment>
<gene>
    <name evidence="1" type="primary">rsmG</name>
    <name type="ordered locus">BG0176</name>
</gene>
<evidence type="ECO:0000255" key="1">
    <source>
        <dbReference type="HAMAP-Rule" id="MF_00074"/>
    </source>
</evidence>
<organism>
    <name type="scientific">Borrelia garinii subsp. bavariensis (strain ATCC BAA-2496 / DSM 23469 / PBi)</name>
    <name type="common">Borreliella bavariensis</name>
    <dbReference type="NCBI Taxonomy" id="290434"/>
    <lineage>
        <taxon>Bacteria</taxon>
        <taxon>Pseudomonadati</taxon>
        <taxon>Spirochaetota</taxon>
        <taxon>Spirochaetia</taxon>
        <taxon>Spirochaetales</taxon>
        <taxon>Borreliaceae</taxon>
        <taxon>Borreliella</taxon>
    </lineage>
</organism>
<dbReference type="EC" id="2.1.1.-" evidence="1"/>
<dbReference type="EMBL" id="CP000013">
    <property type="protein sequence ID" value="AAU07034.1"/>
    <property type="molecule type" value="Genomic_DNA"/>
</dbReference>
<dbReference type="RefSeq" id="WP_011193525.1">
    <property type="nucleotide sequence ID" value="NZ_CP028872.1"/>
</dbReference>
<dbReference type="SMR" id="Q662I7"/>
<dbReference type="GeneID" id="45160969"/>
<dbReference type="KEGG" id="bga:BG0176"/>
<dbReference type="eggNOG" id="COG0357">
    <property type="taxonomic scope" value="Bacteria"/>
</dbReference>
<dbReference type="HOGENOM" id="CLU_065341_2_0_12"/>
<dbReference type="OrthoDB" id="9808773at2"/>
<dbReference type="Proteomes" id="UP000002276">
    <property type="component" value="Chromosome"/>
</dbReference>
<dbReference type="GO" id="GO:0005829">
    <property type="term" value="C:cytosol"/>
    <property type="evidence" value="ECO:0007669"/>
    <property type="project" value="TreeGrafter"/>
</dbReference>
<dbReference type="GO" id="GO:0070043">
    <property type="term" value="F:rRNA (guanine-N7-)-methyltransferase activity"/>
    <property type="evidence" value="ECO:0007669"/>
    <property type="project" value="UniProtKB-UniRule"/>
</dbReference>
<dbReference type="Gene3D" id="3.40.50.150">
    <property type="entry name" value="Vaccinia Virus protein VP39"/>
    <property type="match status" value="1"/>
</dbReference>
<dbReference type="HAMAP" id="MF_00074">
    <property type="entry name" value="16SrRNA_methyltr_G"/>
    <property type="match status" value="1"/>
</dbReference>
<dbReference type="InterPro" id="IPR003682">
    <property type="entry name" value="rRNA_ssu_MeTfrase_G"/>
</dbReference>
<dbReference type="InterPro" id="IPR029063">
    <property type="entry name" value="SAM-dependent_MTases_sf"/>
</dbReference>
<dbReference type="NCBIfam" id="TIGR00138">
    <property type="entry name" value="rsmG_gidB"/>
    <property type="match status" value="1"/>
</dbReference>
<dbReference type="PANTHER" id="PTHR31760">
    <property type="entry name" value="S-ADENOSYL-L-METHIONINE-DEPENDENT METHYLTRANSFERASES SUPERFAMILY PROTEIN"/>
    <property type="match status" value="1"/>
</dbReference>
<dbReference type="PANTHER" id="PTHR31760:SF0">
    <property type="entry name" value="S-ADENOSYL-L-METHIONINE-DEPENDENT METHYLTRANSFERASES SUPERFAMILY PROTEIN"/>
    <property type="match status" value="1"/>
</dbReference>
<dbReference type="Pfam" id="PF02527">
    <property type="entry name" value="GidB"/>
    <property type="match status" value="1"/>
</dbReference>
<dbReference type="PIRSF" id="PIRSF003078">
    <property type="entry name" value="GidB"/>
    <property type="match status" value="1"/>
</dbReference>
<dbReference type="SUPFAM" id="SSF53335">
    <property type="entry name" value="S-adenosyl-L-methionine-dependent methyltransferases"/>
    <property type="match status" value="1"/>
</dbReference>
<proteinExistence type="inferred from homology"/>
<accession>Q662I7</accession>
<sequence>MISDIEFAFSECNFQFAYKDLQKINLYIKRILLLNTRFNLISNSNSNFNSILNLHVIDSLLGLPTIKEINPSEILDVGSGSGFPGIVLAIFDTSRKYYLLERSKKKSTFLKMIKLELDLENVKILEYEIEREKKKYEFITIRAFRSMNEYALVLKNLLKNGGLIMAYKGKFDKINLEVNQIKDLFSKIEVKSLNSKLSLDRNLVLLYR</sequence>
<protein>
    <recommendedName>
        <fullName evidence="1">Ribosomal RNA small subunit methyltransferase G</fullName>
        <ecNumber evidence="1">2.1.1.-</ecNumber>
    </recommendedName>
    <alternativeName>
        <fullName evidence="1">16S rRNA 7-methylguanosine methyltransferase</fullName>
        <shortName evidence="1">16S rRNA m7G methyltransferase</shortName>
    </alternativeName>
</protein>
<feature type="chain" id="PRO_0000184226" description="Ribosomal RNA small subunit methyltransferase G">
    <location>
        <begin position="1"/>
        <end position="208"/>
    </location>
</feature>
<feature type="binding site" evidence="1">
    <location>
        <position position="78"/>
    </location>
    <ligand>
        <name>S-adenosyl-L-methionine</name>
        <dbReference type="ChEBI" id="CHEBI:59789"/>
    </ligand>
</feature>
<feature type="binding site" evidence="1">
    <location>
        <position position="83"/>
    </location>
    <ligand>
        <name>S-adenosyl-L-methionine</name>
        <dbReference type="ChEBI" id="CHEBI:59789"/>
    </ligand>
</feature>
<feature type="binding site" evidence="1">
    <location>
        <begin position="101"/>
        <end position="103"/>
    </location>
    <ligand>
        <name>S-adenosyl-L-methionine</name>
        <dbReference type="ChEBI" id="CHEBI:59789"/>
    </ligand>
</feature>
<feature type="binding site" evidence="1">
    <location>
        <begin position="129"/>
        <end position="130"/>
    </location>
    <ligand>
        <name>S-adenosyl-L-methionine</name>
        <dbReference type="ChEBI" id="CHEBI:59789"/>
    </ligand>
</feature>
<feature type="binding site" evidence="1">
    <location>
        <position position="142"/>
    </location>
    <ligand>
        <name>S-adenosyl-L-methionine</name>
        <dbReference type="ChEBI" id="CHEBI:59789"/>
    </ligand>
</feature>
<name>RSMG_BORGP</name>
<keyword id="KW-0963">Cytoplasm</keyword>
<keyword id="KW-0489">Methyltransferase</keyword>
<keyword id="KW-0698">rRNA processing</keyword>
<keyword id="KW-0949">S-adenosyl-L-methionine</keyword>
<keyword id="KW-0808">Transferase</keyword>